<name>MRH4_NEOFI</name>
<reference key="1">
    <citation type="journal article" date="2008" name="PLoS Genet.">
        <title>Genomic islands in the pathogenic filamentous fungus Aspergillus fumigatus.</title>
        <authorList>
            <person name="Fedorova N.D."/>
            <person name="Khaldi N."/>
            <person name="Joardar V.S."/>
            <person name="Maiti R."/>
            <person name="Amedeo P."/>
            <person name="Anderson M.J."/>
            <person name="Crabtree J."/>
            <person name="Silva J.C."/>
            <person name="Badger J.H."/>
            <person name="Albarraq A."/>
            <person name="Angiuoli S."/>
            <person name="Bussey H."/>
            <person name="Bowyer P."/>
            <person name="Cotty P.J."/>
            <person name="Dyer P.S."/>
            <person name="Egan A."/>
            <person name="Galens K."/>
            <person name="Fraser-Liggett C.M."/>
            <person name="Haas B.J."/>
            <person name="Inman J.M."/>
            <person name="Kent R."/>
            <person name="Lemieux S."/>
            <person name="Malavazi I."/>
            <person name="Orvis J."/>
            <person name="Roemer T."/>
            <person name="Ronning C.M."/>
            <person name="Sundaram J.P."/>
            <person name="Sutton G."/>
            <person name="Turner G."/>
            <person name="Venter J.C."/>
            <person name="White O.R."/>
            <person name="Whitty B.R."/>
            <person name="Youngman P."/>
            <person name="Wolfe K.H."/>
            <person name="Goldman G.H."/>
            <person name="Wortman J.R."/>
            <person name="Jiang B."/>
            <person name="Denning D.W."/>
            <person name="Nierman W.C."/>
        </authorList>
    </citation>
    <scope>NUCLEOTIDE SEQUENCE [LARGE SCALE GENOMIC DNA]</scope>
    <source>
        <strain>ATCC 1020 / DSM 3700 / CBS 544.65 / FGSC A1164 / JCM 1740 / NRRL 181 / WB 181</strain>
    </source>
</reference>
<sequence>MNRLGRLPLPLPPSVCLFCQSRATTPLPPSLQATRSMATARLRRRVARMTLSPDVAKPSVVKKTRGDKERFGPFAGMNQTEARIRDKPRTRSRAAQKRSGEPEEDSQKESPLYKALKMQTALAPIPYGRRAAIKAKIADITSFDQFQLLPVVRNSISSQALPGLVDVTPTPIQRLAIPRLLEEPKTEKKPTKADDDEPQYDQYLLAAETGSGKTLAYLLPVVDAVKREEARDKELEKKEQEEKAREREEKLKNRAFDIEPEIPPLSNAGRPRAIILVPTSELVAQVGVKVKALSHTVKYRSGMISSNLTPRRIKNTLFHPDGIDILVATPHLLASIAKTEPYVLSRVSHLVLDEADSLLDRSFAPTTTEIISKAAPSLRKLILCSATIPRSLDNLLRKRYPDIKRLTTPNLHAIPRRVQLGVVDIEKDPYRGNRSLACADVIWSIGKAGDAESEGPYASYVAPKTKKILVFVNEREEADEVAQFLRSKGIDAQSLSRDSDARKQEEILAEFTEAPPPPTPDEILLAQKQRRHEDAIPFEMPQKTNQDSSRRLANTKVLVTTDLASRGIDTLAVKTVILYHVPHTTIDFIHRLGRLGRMGKRGRGVVLVGKKDRKDVVKEVREGMFRGQALI</sequence>
<keyword id="KW-0067">ATP-binding</keyword>
<keyword id="KW-0347">Helicase</keyword>
<keyword id="KW-0378">Hydrolase</keyword>
<keyword id="KW-0496">Mitochondrion</keyword>
<keyword id="KW-0547">Nucleotide-binding</keyword>
<keyword id="KW-1185">Reference proteome</keyword>
<keyword id="KW-0694">RNA-binding</keyword>
<keyword id="KW-0809">Transit peptide</keyword>
<proteinExistence type="inferred from homology"/>
<protein>
    <recommendedName>
        <fullName>ATP-dependent RNA helicase mrh4, mitochondrial</fullName>
        <ecNumber>3.6.4.13</ecNumber>
    </recommendedName>
</protein>
<accession>A1DGF2</accession>
<evidence type="ECO:0000250" key="1"/>
<evidence type="ECO:0000255" key="2"/>
<evidence type="ECO:0000255" key="3">
    <source>
        <dbReference type="PROSITE-ProRule" id="PRU00541"/>
    </source>
</evidence>
<evidence type="ECO:0000255" key="4">
    <source>
        <dbReference type="PROSITE-ProRule" id="PRU00542"/>
    </source>
</evidence>
<evidence type="ECO:0000256" key="5">
    <source>
        <dbReference type="SAM" id="MobiDB-lite"/>
    </source>
</evidence>
<evidence type="ECO:0000305" key="6"/>
<gene>
    <name type="primary">mrh4</name>
    <name type="ORF">NFIA_084110</name>
</gene>
<comment type="function">
    <text evidence="1">ATP-binding RNA helicase involved in mitochondrial RNA metabolism. Required for maintenance of mitochondrial DNA (By similarity).</text>
</comment>
<comment type="catalytic activity">
    <reaction>
        <text>ATP + H2O = ADP + phosphate + H(+)</text>
        <dbReference type="Rhea" id="RHEA:13065"/>
        <dbReference type="ChEBI" id="CHEBI:15377"/>
        <dbReference type="ChEBI" id="CHEBI:15378"/>
        <dbReference type="ChEBI" id="CHEBI:30616"/>
        <dbReference type="ChEBI" id="CHEBI:43474"/>
        <dbReference type="ChEBI" id="CHEBI:456216"/>
        <dbReference type="EC" id="3.6.4.13"/>
    </reaction>
</comment>
<comment type="subcellular location">
    <subcellularLocation>
        <location evidence="1">Mitochondrion</location>
    </subcellularLocation>
</comment>
<comment type="domain">
    <text>The Q motif is unique to and characteristic of the DEAD box family of RNA helicases and controls ATP binding and hydrolysis.</text>
</comment>
<comment type="similarity">
    <text evidence="6">Belongs to the DEAD box helicase family. MRH4 subfamily.</text>
</comment>
<dbReference type="EC" id="3.6.4.13"/>
<dbReference type="EMBL" id="DS027696">
    <property type="protein sequence ID" value="EAW18459.1"/>
    <property type="molecule type" value="Genomic_DNA"/>
</dbReference>
<dbReference type="RefSeq" id="XP_001260356.1">
    <property type="nucleotide sequence ID" value="XM_001260355.1"/>
</dbReference>
<dbReference type="SMR" id="A1DGF2"/>
<dbReference type="STRING" id="331117.A1DGF2"/>
<dbReference type="EnsemblFungi" id="EAW18459">
    <property type="protein sequence ID" value="EAW18459"/>
    <property type="gene ID" value="NFIA_084110"/>
</dbReference>
<dbReference type="GeneID" id="4586914"/>
<dbReference type="KEGG" id="nfi:NFIA_084110"/>
<dbReference type="VEuPathDB" id="FungiDB:NFIA_084110"/>
<dbReference type="eggNOG" id="KOG0335">
    <property type="taxonomic scope" value="Eukaryota"/>
</dbReference>
<dbReference type="HOGENOM" id="CLU_003041_18_0_1"/>
<dbReference type="OMA" id="HSTIDFI"/>
<dbReference type="OrthoDB" id="10256233at2759"/>
<dbReference type="Proteomes" id="UP000006702">
    <property type="component" value="Unassembled WGS sequence"/>
</dbReference>
<dbReference type="GO" id="GO:0005739">
    <property type="term" value="C:mitochondrion"/>
    <property type="evidence" value="ECO:0007669"/>
    <property type="project" value="UniProtKB-SubCell"/>
</dbReference>
<dbReference type="GO" id="GO:0005524">
    <property type="term" value="F:ATP binding"/>
    <property type="evidence" value="ECO:0007669"/>
    <property type="project" value="UniProtKB-KW"/>
</dbReference>
<dbReference type="GO" id="GO:0016887">
    <property type="term" value="F:ATP hydrolysis activity"/>
    <property type="evidence" value="ECO:0007669"/>
    <property type="project" value="RHEA"/>
</dbReference>
<dbReference type="GO" id="GO:0003723">
    <property type="term" value="F:RNA binding"/>
    <property type="evidence" value="ECO:0007669"/>
    <property type="project" value="UniProtKB-KW"/>
</dbReference>
<dbReference type="GO" id="GO:0003724">
    <property type="term" value="F:RNA helicase activity"/>
    <property type="evidence" value="ECO:0007669"/>
    <property type="project" value="UniProtKB-EC"/>
</dbReference>
<dbReference type="CDD" id="cd18787">
    <property type="entry name" value="SF2_C_DEAD"/>
    <property type="match status" value="1"/>
</dbReference>
<dbReference type="Gene3D" id="3.40.50.300">
    <property type="entry name" value="P-loop containing nucleotide triphosphate hydrolases"/>
    <property type="match status" value="2"/>
</dbReference>
<dbReference type="InterPro" id="IPR011545">
    <property type="entry name" value="DEAD/DEAH_box_helicase_dom"/>
</dbReference>
<dbReference type="InterPro" id="IPR014001">
    <property type="entry name" value="Helicase_ATP-bd"/>
</dbReference>
<dbReference type="InterPro" id="IPR001650">
    <property type="entry name" value="Helicase_C-like"/>
</dbReference>
<dbReference type="InterPro" id="IPR027417">
    <property type="entry name" value="P-loop_NTPase"/>
</dbReference>
<dbReference type="PANTHER" id="PTHR47960">
    <property type="entry name" value="DEAD-BOX ATP-DEPENDENT RNA HELICASE 50"/>
    <property type="match status" value="1"/>
</dbReference>
<dbReference type="Pfam" id="PF00270">
    <property type="entry name" value="DEAD"/>
    <property type="match status" value="1"/>
</dbReference>
<dbReference type="Pfam" id="PF00271">
    <property type="entry name" value="Helicase_C"/>
    <property type="match status" value="1"/>
</dbReference>
<dbReference type="SMART" id="SM00487">
    <property type="entry name" value="DEXDc"/>
    <property type="match status" value="1"/>
</dbReference>
<dbReference type="SMART" id="SM00490">
    <property type="entry name" value="HELICc"/>
    <property type="match status" value="1"/>
</dbReference>
<dbReference type="SUPFAM" id="SSF52540">
    <property type="entry name" value="P-loop containing nucleoside triphosphate hydrolases"/>
    <property type="match status" value="1"/>
</dbReference>
<dbReference type="PROSITE" id="PS51192">
    <property type="entry name" value="HELICASE_ATP_BIND_1"/>
    <property type="match status" value="1"/>
</dbReference>
<dbReference type="PROSITE" id="PS51194">
    <property type="entry name" value="HELICASE_CTER"/>
    <property type="match status" value="1"/>
</dbReference>
<dbReference type="PROSITE" id="PS51195">
    <property type="entry name" value="Q_MOTIF"/>
    <property type="match status" value="1"/>
</dbReference>
<feature type="transit peptide" description="Mitochondrion" evidence="2">
    <location>
        <begin position="1"/>
        <end position="45"/>
    </location>
</feature>
<feature type="chain" id="PRO_0000282711" description="ATP-dependent RNA helicase mrh4, mitochondrial">
    <location>
        <begin position="46"/>
        <end position="631"/>
    </location>
</feature>
<feature type="domain" description="Helicase ATP-binding" evidence="3">
    <location>
        <begin position="194"/>
        <end position="406"/>
    </location>
</feature>
<feature type="domain" description="Helicase C-terminal" evidence="4">
    <location>
        <begin position="455"/>
        <end position="631"/>
    </location>
</feature>
<feature type="region of interest" description="Disordered" evidence="5">
    <location>
        <begin position="68"/>
        <end position="111"/>
    </location>
</feature>
<feature type="region of interest" description="Disordered" evidence="5">
    <location>
        <begin position="180"/>
        <end position="199"/>
    </location>
</feature>
<feature type="region of interest" description="Disordered" evidence="5">
    <location>
        <begin position="229"/>
        <end position="249"/>
    </location>
</feature>
<feature type="short sequence motif" description="Q motif">
    <location>
        <begin position="141"/>
        <end position="174"/>
    </location>
</feature>
<feature type="short sequence motif" description="DEAD box">
    <location>
        <begin position="353"/>
        <end position="356"/>
    </location>
</feature>
<feature type="compositionally biased region" description="Basic and acidic residues" evidence="5">
    <location>
        <begin position="98"/>
        <end position="108"/>
    </location>
</feature>
<feature type="compositionally biased region" description="Basic and acidic residues" evidence="5">
    <location>
        <begin position="180"/>
        <end position="193"/>
    </location>
</feature>
<feature type="binding site" evidence="3">
    <location>
        <begin position="207"/>
        <end position="214"/>
    </location>
    <ligand>
        <name>ATP</name>
        <dbReference type="ChEBI" id="CHEBI:30616"/>
    </ligand>
</feature>
<organism>
    <name type="scientific">Neosartorya fischeri (strain ATCC 1020 / DSM 3700 / CBS 544.65 / FGSC A1164 / JCM 1740 / NRRL 181 / WB 181)</name>
    <name type="common">Aspergillus fischerianus</name>
    <dbReference type="NCBI Taxonomy" id="331117"/>
    <lineage>
        <taxon>Eukaryota</taxon>
        <taxon>Fungi</taxon>
        <taxon>Dikarya</taxon>
        <taxon>Ascomycota</taxon>
        <taxon>Pezizomycotina</taxon>
        <taxon>Eurotiomycetes</taxon>
        <taxon>Eurotiomycetidae</taxon>
        <taxon>Eurotiales</taxon>
        <taxon>Aspergillaceae</taxon>
        <taxon>Aspergillus</taxon>
        <taxon>Aspergillus subgen. Fumigati</taxon>
    </lineage>
</organism>